<organism>
    <name type="scientific">Influenza A virus (strain A/Hickox/1940 H1N1)</name>
    <dbReference type="NCBI Taxonomy" id="383543"/>
    <lineage>
        <taxon>Viruses</taxon>
        <taxon>Riboviria</taxon>
        <taxon>Orthornavirae</taxon>
        <taxon>Negarnaviricota</taxon>
        <taxon>Polyploviricotina</taxon>
        <taxon>Insthoviricetes</taxon>
        <taxon>Articulavirales</taxon>
        <taxon>Orthomyxoviridae</taxon>
        <taxon>Alphainfluenzavirus</taxon>
        <taxon>Alphainfluenzavirus influenzae</taxon>
        <taxon>Influenza A virus</taxon>
    </lineage>
</organism>
<keyword id="KW-0025">Alternative splicing</keyword>
<keyword id="KW-1048">Host nucleus</keyword>
<keyword id="KW-0945">Host-virus interaction</keyword>
<keyword id="KW-0813">Transport</keyword>
<keyword id="KW-0946">Virion</keyword>
<proteinExistence type="inferred from homology"/>
<name>NEP_I40A0</name>
<comment type="function">
    <text evidence="1">Mediates the nuclear export of encapsidated genomic RNAs (ribonucleoproteins, RNPs). Acts as an adapter between viral RNPs complexes and the nuclear export machinery of the cell. Possesses no intrinsic RNA-binding activity, but includes a C-terminal M1-binding domain. This domain is believed to allow recognition of RNPs bound to the protein M1. Since protein M1 is not available in large quantities before late stages of infection, such an indirect recognition mechanism probably ensures that genomic RNPs are not exported from the host nucleus until sufficient quantities of viral mRNA and progeny genomic RNA have been synthesized. Furthermore, the RNPs enter the host cytoplasm only when associated with the M1 protein that is necessary to guide them to the plasma membrane. May down-regulate viral RNA synthesis when overproduced.</text>
</comment>
<comment type="subunit">
    <text evidence="1">Interacts with protein M1. May interact with host nucleoporin RAB/HRB and exportin XPO1/CRM1.</text>
</comment>
<comment type="subcellular location">
    <subcellularLocation>
        <location evidence="1">Virion</location>
    </subcellularLocation>
    <subcellularLocation>
        <location evidence="1">Host nucleus</location>
    </subcellularLocation>
</comment>
<comment type="alternative products">
    <event type="alternative splicing"/>
    <isoform>
        <id>Q0HD55-1</id>
        <name>NEP</name>
        <name>NS2</name>
        <sequence type="displayed"/>
    </isoform>
    <isoform>
        <id>Q0HD54-1</id>
        <name>NS1</name>
        <sequence type="external"/>
    </isoform>
</comment>
<comment type="miscellaneous">
    <text>Average number present in a viral particle is estimated to be 130-200 molecules.</text>
</comment>
<comment type="similarity">
    <text evidence="1">Belongs to the influenza viruses NEP family.</text>
</comment>
<accession>Q0HD55</accession>
<feature type="chain" id="PRO_0000372950" description="Nuclear export protein">
    <location>
        <begin position="1"/>
        <end position="121"/>
    </location>
</feature>
<feature type="short sequence motif" description="Nuclear export signal" evidence="1">
    <location>
        <begin position="12"/>
        <end position="21"/>
    </location>
</feature>
<feature type="short sequence motif" description="Nuclear export signal" evidence="1">
    <location>
        <begin position="85"/>
        <end position="94"/>
    </location>
</feature>
<protein>
    <recommendedName>
        <fullName evidence="1">Nuclear export protein</fullName>
        <shortName evidence="1">NEP</shortName>
    </recommendedName>
    <alternativeName>
        <fullName evidence="1">Non-structural protein 2</fullName>
        <shortName evidence="1">NS2</shortName>
    </alternativeName>
</protein>
<organismHost>
    <name type="scientific">Aves</name>
    <dbReference type="NCBI Taxonomy" id="8782"/>
</organismHost>
<organismHost>
    <name type="scientific">Homo sapiens</name>
    <name type="common">Human</name>
    <dbReference type="NCBI Taxonomy" id="9606"/>
</organismHost>
<organismHost>
    <name type="scientific">Sus scrofa</name>
    <name type="common">Pig</name>
    <dbReference type="NCBI Taxonomy" id="9823"/>
</organismHost>
<evidence type="ECO:0000255" key="1">
    <source>
        <dbReference type="HAMAP-Rule" id="MF_04067"/>
    </source>
</evidence>
<sequence length="121" mass="14452">MDPNTVSSFQDILMRMSKMQLESSSEDLNGMITQFESLKLYRDSLGEAVMRMGDLHSLQNRNGKWREQLGQKFEEIRWLIEEVRHRLKITENSFEQITFMQALQLLFEVEQEIRTFSFQLI</sequence>
<gene>
    <name evidence="1" type="primary">NS</name>
</gene>
<dbReference type="EMBL" id="CY013275">
    <property type="protein sequence ID" value="ABI20832.1"/>
    <property type="molecule type" value="Other_RNA"/>
</dbReference>
<dbReference type="SMR" id="Q0HD55"/>
<dbReference type="Proteomes" id="UP000156248">
    <property type="component" value="Genome"/>
</dbReference>
<dbReference type="GO" id="GO:0042025">
    <property type="term" value="C:host cell nucleus"/>
    <property type="evidence" value="ECO:0007669"/>
    <property type="project" value="UniProtKB-SubCell"/>
</dbReference>
<dbReference type="GO" id="GO:0044423">
    <property type="term" value="C:virion component"/>
    <property type="evidence" value="ECO:0007669"/>
    <property type="project" value="UniProtKB-UniRule"/>
</dbReference>
<dbReference type="GO" id="GO:0039675">
    <property type="term" value="P:exit of virus from host cell nucleus through nuclear pore"/>
    <property type="evidence" value="ECO:0007669"/>
    <property type="project" value="UniProtKB-UniRule"/>
</dbReference>
<dbReference type="Gene3D" id="1.10.287.230">
    <property type="match status" value="1"/>
</dbReference>
<dbReference type="HAMAP" id="MF_04067">
    <property type="entry name" value="INFV_NEP"/>
    <property type="match status" value="1"/>
</dbReference>
<dbReference type="InterPro" id="IPR000968">
    <property type="entry name" value="Flu_NS2"/>
</dbReference>
<dbReference type="Pfam" id="PF00601">
    <property type="entry name" value="Flu_NS2"/>
    <property type="match status" value="1"/>
</dbReference>
<dbReference type="SUPFAM" id="SSF101156">
    <property type="entry name" value="Nonstructural protein ns2, Nep, M1-binding domain"/>
    <property type="match status" value="1"/>
</dbReference>
<reference key="1">
    <citation type="submission" date="2006-08" db="EMBL/GenBank/DDBJ databases">
        <title>The NIAID influenza genome sequencing project.</title>
        <authorList>
            <person name="Spiro D."/>
            <person name="Ghedin E."/>
            <person name="Sengamalay N."/>
            <person name="Halpin R."/>
            <person name="Boyne A."/>
            <person name="Zaborsky J."/>
            <person name="Feldblyum T."/>
            <person name="Subbu V."/>
            <person name="Sparenborg J."/>
            <person name="Shumway M."/>
            <person name="Sitz J."/>
            <person name="Katzel D."/>
            <person name="Koo H."/>
            <person name="Salzberg S.L."/>
            <person name="Griesemer S."/>
            <person name="St George K."/>
            <person name="Bennett R."/>
            <person name="Taylor J."/>
            <person name="Bennink J.R."/>
            <person name="Yewdell J.W."/>
            <person name="Bao Y."/>
            <person name="Bolotov P."/>
            <person name="Dernovoy D."/>
            <person name="Kiryutin B."/>
            <person name="Lipman D.J."/>
            <person name="Tatusova T."/>
        </authorList>
    </citation>
    <scope>NUCLEOTIDE SEQUENCE [GENOMIC RNA]</scope>
</reference>
<reference key="2">
    <citation type="submission" date="2006-09" db="EMBL/GenBank/DDBJ databases">
        <authorList>
            <consortium name="The NIAID Influenza Genome Sequencing Consortium"/>
        </authorList>
    </citation>
    <scope>NUCLEOTIDE SEQUENCE [GENOMIC RNA]</scope>
</reference>